<protein>
    <recommendedName>
        <fullName evidence="5">Alpha-ketoglutarate-dependent dioxygenase cnsP</fullName>
        <ecNumber>1.14.11.-</ecNumber>
    </recommendedName>
    <alternativeName>
        <fullName evidence="5">Communesin biosynthesis cluster protein P</fullName>
    </alternativeName>
</protein>
<dbReference type="EC" id="1.14.11.-"/>
<dbReference type="EMBL" id="JQFZ01000090">
    <property type="protein sequence ID" value="KGO59709.1"/>
    <property type="molecule type" value="Genomic_DNA"/>
</dbReference>
<dbReference type="RefSeq" id="XP_016600822.1">
    <property type="nucleotide sequence ID" value="XM_016742824.1"/>
</dbReference>
<dbReference type="SMR" id="A0A0A2IJP3"/>
<dbReference type="STRING" id="27334.A0A0A2IJP3"/>
<dbReference type="GeneID" id="27678243"/>
<dbReference type="VEuPathDB" id="FungiDB:PEXP_030610"/>
<dbReference type="HOGENOM" id="CLU_036005_0_0_1"/>
<dbReference type="OrthoDB" id="10257314at2759"/>
<dbReference type="PhylomeDB" id="A0A0A2IJP3"/>
<dbReference type="Proteomes" id="UP000030143">
    <property type="component" value="Unassembled WGS sequence"/>
</dbReference>
<dbReference type="GO" id="GO:0005737">
    <property type="term" value="C:cytoplasm"/>
    <property type="evidence" value="ECO:0007669"/>
    <property type="project" value="TreeGrafter"/>
</dbReference>
<dbReference type="GO" id="GO:0016706">
    <property type="term" value="F:2-oxoglutarate-dependent dioxygenase activity"/>
    <property type="evidence" value="ECO:0007669"/>
    <property type="project" value="TreeGrafter"/>
</dbReference>
<dbReference type="GO" id="GO:0046872">
    <property type="term" value="F:metal ion binding"/>
    <property type="evidence" value="ECO:0007669"/>
    <property type="project" value="UniProtKB-KW"/>
</dbReference>
<dbReference type="Gene3D" id="3.60.130.10">
    <property type="entry name" value="Clavaminate synthase-like"/>
    <property type="match status" value="1"/>
</dbReference>
<dbReference type="InterPro" id="IPR051323">
    <property type="entry name" value="AtsK-like"/>
</dbReference>
<dbReference type="InterPro" id="IPR042098">
    <property type="entry name" value="TauD-like_sf"/>
</dbReference>
<dbReference type="InterPro" id="IPR003819">
    <property type="entry name" value="TauD/TfdA-like"/>
</dbReference>
<dbReference type="PANTHER" id="PTHR30468">
    <property type="entry name" value="ALPHA-KETOGLUTARATE-DEPENDENT SULFONATE DIOXYGENASE"/>
    <property type="match status" value="1"/>
</dbReference>
<dbReference type="PANTHER" id="PTHR30468:SF1">
    <property type="entry name" value="ALPHA-KETOGLUTARATE-DEPENDENT SULFONATE DIOXYGENASE"/>
    <property type="match status" value="1"/>
</dbReference>
<dbReference type="Pfam" id="PF02668">
    <property type="entry name" value="TauD"/>
    <property type="match status" value="1"/>
</dbReference>
<dbReference type="SUPFAM" id="SSF51197">
    <property type="entry name" value="Clavaminate synthase-like"/>
    <property type="match status" value="1"/>
</dbReference>
<gene>
    <name evidence="5" type="primary">cnsP</name>
    <name type="ORF">PEX2_055500</name>
</gene>
<keyword id="KW-0223">Dioxygenase</keyword>
<keyword id="KW-0408">Iron</keyword>
<keyword id="KW-0479">Metal-binding</keyword>
<keyword id="KW-0560">Oxidoreductase</keyword>
<keyword id="KW-1185">Reference proteome</keyword>
<evidence type="ECO:0000250" key="1">
    <source>
        <dbReference type="UniProtKB" id="P37610"/>
    </source>
</evidence>
<evidence type="ECO:0000256" key="2">
    <source>
        <dbReference type="SAM" id="MobiDB-lite"/>
    </source>
</evidence>
<evidence type="ECO:0000269" key="3">
    <source>
    </source>
</evidence>
<evidence type="ECO:0000269" key="4">
    <source>
    </source>
</evidence>
<evidence type="ECO:0000303" key="5">
    <source>
    </source>
</evidence>
<evidence type="ECO:0000305" key="6"/>
<evidence type="ECO:0000305" key="7">
    <source>
    </source>
</evidence>
<comment type="function">
    <text evidence="3 4">Alpha-ketoglutarate-dependent dioxygenase; part of the gene cluster that mediates the biosynthesis of communesins, a prominent class of indole alkaloids with great potential as pharmaceuticals (PubMed:25571861). Communesins are biosynthesized by the coupling of tryptamine and aurantioclavine, two building blocks derived from L-tryptophan (PubMed:25571861). The L-tryptophan decarboxylase cnsB converts L-tryptophan to tryptamine, whereas the tryptophan dimethylallyltransferase cnsF converts L-tryptophan to 4-dimethylallyl tryptophan which is further transformed to aurantioclavine by the aurantioclavine synthase cnsA, probably aided by the catalase cnsD (PubMed:25571861). The cytochrome P450 monooxygenase cnsC catalyzes the heterodimeric coupling between the two different indole moieties, tryptamine and aurantioclavine, to construct vicinal quaternary stereocenters and yield the heptacyclic communesin scaffold (PubMed:26963294). The O-methyltransferase cnsE then methylates the communesin scaffold to produce communesin K, the simplest characterized communesin that contains the heptacyclic core (PubMed:25571861). The dioxygenase cnsJ converts communesin K into communesin I (PubMed:25571861). Acylation to introduce the hexadienyl group at position N16 of communesin I by the acyltransferase cnsK leads to the production of communesin B. The hexadienyl group is produced by the highly reducing polyketide synthase cnsI, before being hydrolytically removed from cnsI by the serine hydrolase cnsH, converted into hexadienyl-CoA by the CoA ligase cnsG, and then transferred to communesin I by cnsK (PubMed:25571861). Surprisingly, cnsK may also be a promiscuous acyltransferase that can tolerate a range of acyl groups, including acetyl-, propionyl-, and butyryl-CoA, which lead to communesins A, G and H respectively (PubMed:25571861). The roles of the alpha-ketoglutarate-dependent dioxygenases cnsM and cnsP have still to be determined (PubMed:25571861).</text>
</comment>
<comment type="cofactor">
    <cofactor evidence="1">
        <name>Fe(2+)</name>
        <dbReference type="ChEBI" id="CHEBI:29033"/>
    </cofactor>
    <text evidence="1">Binds 1 Fe(2+) ion per subunit.</text>
</comment>
<comment type="pathway">
    <text evidence="7">Alkaloid biosynthesis.</text>
</comment>
<comment type="similarity">
    <text evidence="6">Belongs to the TfdA dioxygenase family.</text>
</comment>
<proteinExistence type="inferred from homology"/>
<feature type="chain" id="PRO_0000446469" description="Alpha-ketoglutarate-dependent dioxygenase cnsP">
    <location>
        <begin position="1"/>
        <end position="370"/>
    </location>
</feature>
<feature type="region of interest" description="Disordered" evidence="2">
    <location>
        <begin position="1"/>
        <end position="20"/>
    </location>
</feature>
<feature type="compositionally biased region" description="Low complexity" evidence="2">
    <location>
        <begin position="1"/>
        <end position="12"/>
    </location>
</feature>
<feature type="binding site" evidence="1">
    <location>
        <position position="131"/>
    </location>
    <ligand>
        <name>substrate</name>
    </ligand>
</feature>
<feature type="binding site" evidence="1">
    <location>
        <position position="169"/>
    </location>
    <ligand>
        <name>Fe cation</name>
        <dbReference type="ChEBI" id="CHEBI:24875"/>
        <note>catalytic</note>
    </ligand>
</feature>
<feature type="binding site" evidence="1">
    <location>
        <position position="171"/>
    </location>
    <ligand>
        <name>Fe cation</name>
        <dbReference type="ChEBI" id="CHEBI:24875"/>
        <note>catalytic</note>
    </ligand>
</feature>
<feature type="binding site" evidence="1">
    <location>
        <position position="197"/>
    </location>
    <ligand>
        <name>2-oxoglutarate</name>
        <dbReference type="ChEBI" id="CHEBI:16810"/>
    </ligand>
</feature>
<feature type="binding site" evidence="1">
    <location>
        <position position="321"/>
    </location>
    <ligand>
        <name>Fe cation</name>
        <dbReference type="ChEBI" id="CHEBI:24875"/>
        <note>catalytic</note>
    </ligand>
</feature>
<feature type="binding site" evidence="1">
    <location>
        <position position="333"/>
    </location>
    <ligand>
        <name>2-oxoglutarate</name>
        <dbReference type="ChEBI" id="CHEBI:16810"/>
    </ligand>
</feature>
<feature type="binding site" evidence="1">
    <location>
        <position position="337"/>
    </location>
    <ligand>
        <name>2-oxoglutarate</name>
        <dbReference type="ChEBI" id="CHEBI:16810"/>
    </ligand>
</feature>
<feature type="binding site" evidence="1">
    <location>
        <position position="337"/>
    </location>
    <ligand>
        <name>substrate</name>
    </ligand>
</feature>
<accession>A0A0A2IJP3</accession>
<organism>
    <name type="scientific">Penicillium expansum</name>
    <name type="common">Blue mold rot fungus</name>
    <dbReference type="NCBI Taxonomy" id="27334"/>
    <lineage>
        <taxon>Eukaryota</taxon>
        <taxon>Fungi</taxon>
        <taxon>Dikarya</taxon>
        <taxon>Ascomycota</taxon>
        <taxon>Pezizomycotina</taxon>
        <taxon>Eurotiomycetes</taxon>
        <taxon>Eurotiomycetidae</taxon>
        <taxon>Eurotiales</taxon>
        <taxon>Aspergillaceae</taxon>
        <taxon>Penicillium</taxon>
    </lineage>
</organism>
<name>CNSP_PENEN</name>
<sequence>MSTTTVITPGTITREKNENGAPLYPDYMPFYDPLEKVEDIGAFEHFDPGHRADPKLPNLLKNATKVWELSPHVGTEIHGVQLSQLDSAGLDELALLAAQRGALVFRDQDFVNIGFDAQKKLVSHFGPLHIHGWAPHPAAGSEEHMIIYDHKDDLRVRQSWAGRSPVQWHTDQSPEQQPPGTTFIAMLESPTTAGGDTLVSSSVRAYSSLSPRFRKRLEGLTAIHTNNDGVSQELKHGQQAVMRRGVLQAEHPVVLVHPVTKQKALYVNPVYTKKIVGFDQEESDCILKFLFDHIAKRQDFSCRIRYEAGTVLVWDQRVTNHSQTLDYPIGDRRHGFRLTPLANKPIPAKIEEDDEEFSTDDARHLVGNAS</sequence>
<reference key="1">
    <citation type="journal article" date="2015" name="Mol. Plant Microbe Interact.">
        <title>Genome, transcriptome, and functional analyses of Penicillium expansum provide new insights into secondary metabolism and pathogenicity.</title>
        <authorList>
            <person name="Ballester A.R."/>
            <person name="Marcet-Houben M."/>
            <person name="Levin E."/>
            <person name="Sela N."/>
            <person name="Selma-Lazaro C."/>
            <person name="Carmona L."/>
            <person name="Wisniewski M."/>
            <person name="Droby S."/>
            <person name="Gonzalez-Candelas L."/>
            <person name="Gabaldon T."/>
        </authorList>
    </citation>
    <scope>NUCLEOTIDE SEQUENCE [LARGE SCALE GENOMIC DNA]</scope>
    <source>
        <strain>MD-8</strain>
    </source>
</reference>
<reference key="2">
    <citation type="journal article" date="2015" name="Angew. Chem. Int. Ed.">
        <title>Elucidation of the concise biosynthetic pathway of the communesin indole alkaloids.</title>
        <authorList>
            <person name="Lin H.C."/>
            <person name="Chiou G."/>
            <person name="Chooi Y.H."/>
            <person name="McMahon T.C."/>
            <person name="Xu W."/>
            <person name="Garg N.K."/>
            <person name="Tang Y."/>
        </authorList>
    </citation>
    <scope>IDENTIFICATION</scope>
    <scope>FUNCTION</scope>
    <scope>PATHWAY</scope>
</reference>
<reference key="3">
    <citation type="journal article" date="2016" name="J. Am. Chem. Soc.">
        <title>P450-mediated coupling of indole fragments to forge communesin and unnatural isomers.</title>
        <authorList>
            <person name="Lin H.C."/>
            <person name="McMahon T.C."/>
            <person name="Patel A."/>
            <person name="Corsello M."/>
            <person name="Simon A."/>
            <person name="Xu W."/>
            <person name="Zhao M."/>
            <person name="Houk K.N."/>
            <person name="Garg N.K."/>
            <person name="Tang Y."/>
        </authorList>
    </citation>
    <scope>FUNCTION</scope>
</reference>